<gene>
    <name evidence="1" type="primary">betA</name>
    <name type="ordered locus">ABSDF2440</name>
</gene>
<proteinExistence type="inferred from homology"/>
<protein>
    <recommendedName>
        <fullName evidence="1">Oxygen-dependent choline dehydrogenase</fullName>
        <shortName evidence="1">CDH</shortName>
        <shortName evidence="1">CHD</shortName>
        <ecNumber evidence="1">1.1.99.1</ecNumber>
    </recommendedName>
    <alternativeName>
        <fullName evidence="1">Betaine aldehyde dehydrogenase</fullName>
        <shortName evidence="1">BADH</shortName>
        <ecNumber evidence="1">1.2.1.8</ecNumber>
    </alternativeName>
</protein>
<name>BETA_ACIBS</name>
<sequence>MNIKEYDYIIIGAGSAGNVLAARLTEDKDTTVLLLEAGGPDYRLDFRTQMPAALAYPLQGRRYNWAYLTDPEPHMNNRRMECGRGKGLGGSSLINGMCYIRGNAMDLEQWATHKGLENWTYADCLPYYKKAETRDIGGNDYHGDSGPVSVATPKNGNNVLFHAMVEAGVQAGYPRTDDLNGYQQEGFGPMDRTVTPKGRRSSTARGYLDMAKGRPNLTILTHATTNKILFNQKQAIGVEYIIGADQNNLQRALVKREVLLCAGAIASPQILQRSGVGQSTFLKSMDIDVVHDLPGVGENLQDHLEMYLQYKCKQPVSLYPALKWYNQPAIGAEWLFNGTGIGASNQFEAGGFIRSSDEFKWPNIQYHFLPVAINYNGSNAVKEHGFQAHVGSMRSPSRGRIKLKSKDPFAHPSILFNYMSTEQDWREFRDAIRITREIMHQPALDPYRGDEISPGKHLQTDAELDDFVRNHAETAYHPSCSCKMGEDEMAVVDGQGRVHGMNGLRVVDASIMPLIITGNLNATTIMIAEKIADQIRGREALPRSTAPFYVAS</sequence>
<evidence type="ECO:0000255" key="1">
    <source>
        <dbReference type="HAMAP-Rule" id="MF_00750"/>
    </source>
</evidence>
<accession>B0VST3</accession>
<dbReference type="EC" id="1.1.99.1" evidence="1"/>
<dbReference type="EC" id="1.2.1.8" evidence="1"/>
<dbReference type="EMBL" id="CU468230">
    <property type="protein sequence ID" value="CAP01751.1"/>
    <property type="molecule type" value="Genomic_DNA"/>
</dbReference>
<dbReference type="SMR" id="B0VST3"/>
<dbReference type="KEGG" id="abm:ABSDF2440"/>
<dbReference type="HOGENOM" id="CLU_002865_7_1_6"/>
<dbReference type="UniPathway" id="UPA00529">
    <property type="reaction ID" value="UER00385"/>
</dbReference>
<dbReference type="Proteomes" id="UP000001741">
    <property type="component" value="Chromosome"/>
</dbReference>
<dbReference type="GO" id="GO:0016020">
    <property type="term" value="C:membrane"/>
    <property type="evidence" value="ECO:0007669"/>
    <property type="project" value="TreeGrafter"/>
</dbReference>
<dbReference type="GO" id="GO:0008802">
    <property type="term" value="F:betaine-aldehyde dehydrogenase (NAD+) activity"/>
    <property type="evidence" value="ECO:0007669"/>
    <property type="project" value="UniProtKB-EC"/>
</dbReference>
<dbReference type="GO" id="GO:0008812">
    <property type="term" value="F:choline dehydrogenase activity"/>
    <property type="evidence" value="ECO:0007669"/>
    <property type="project" value="UniProtKB-UniRule"/>
</dbReference>
<dbReference type="GO" id="GO:0050660">
    <property type="term" value="F:flavin adenine dinucleotide binding"/>
    <property type="evidence" value="ECO:0007669"/>
    <property type="project" value="InterPro"/>
</dbReference>
<dbReference type="GO" id="GO:0019285">
    <property type="term" value="P:glycine betaine biosynthetic process from choline"/>
    <property type="evidence" value="ECO:0007669"/>
    <property type="project" value="UniProtKB-UniRule"/>
</dbReference>
<dbReference type="Gene3D" id="3.50.50.60">
    <property type="entry name" value="FAD/NAD(P)-binding domain"/>
    <property type="match status" value="1"/>
</dbReference>
<dbReference type="Gene3D" id="3.30.560.10">
    <property type="entry name" value="Glucose Oxidase, domain 3"/>
    <property type="match status" value="1"/>
</dbReference>
<dbReference type="HAMAP" id="MF_00750">
    <property type="entry name" value="Choline_dehydrogen"/>
    <property type="match status" value="1"/>
</dbReference>
<dbReference type="InterPro" id="IPR011533">
    <property type="entry name" value="BetA"/>
</dbReference>
<dbReference type="InterPro" id="IPR036188">
    <property type="entry name" value="FAD/NAD-bd_sf"/>
</dbReference>
<dbReference type="InterPro" id="IPR012132">
    <property type="entry name" value="GMC_OxRdtase"/>
</dbReference>
<dbReference type="InterPro" id="IPR000172">
    <property type="entry name" value="GMC_OxRdtase_N"/>
</dbReference>
<dbReference type="InterPro" id="IPR007867">
    <property type="entry name" value="GMC_OxRtase_C"/>
</dbReference>
<dbReference type="NCBIfam" id="TIGR01810">
    <property type="entry name" value="betA"/>
    <property type="match status" value="1"/>
</dbReference>
<dbReference type="NCBIfam" id="NF002550">
    <property type="entry name" value="PRK02106.1"/>
    <property type="match status" value="1"/>
</dbReference>
<dbReference type="PANTHER" id="PTHR11552:SF147">
    <property type="entry name" value="CHOLINE DEHYDROGENASE, MITOCHONDRIAL"/>
    <property type="match status" value="1"/>
</dbReference>
<dbReference type="PANTHER" id="PTHR11552">
    <property type="entry name" value="GLUCOSE-METHANOL-CHOLINE GMC OXIDOREDUCTASE"/>
    <property type="match status" value="1"/>
</dbReference>
<dbReference type="Pfam" id="PF05199">
    <property type="entry name" value="GMC_oxred_C"/>
    <property type="match status" value="1"/>
</dbReference>
<dbReference type="Pfam" id="PF00732">
    <property type="entry name" value="GMC_oxred_N"/>
    <property type="match status" value="1"/>
</dbReference>
<dbReference type="PIRSF" id="PIRSF000137">
    <property type="entry name" value="Alcohol_oxidase"/>
    <property type="match status" value="1"/>
</dbReference>
<dbReference type="SUPFAM" id="SSF54373">
    <property type="entry name" value="FAD-linked reductases, C-terminal domain"/>
    <property type="match status" value="1"/>
</dbReference>
<dbReference type="SUPFAM" id="SSF51905">
    <property type="entry name" value="FAD/NAD(P)-binding domain"/>
    <property type="match status" value="1"/>
</dbReference>
<dbReference type="PROSITE" id="PS00623">
    <property type="entry name" value="GMC_OXRED_1"/>
    <property type="match status" value="1"/>
</dbReference>
<dbReference type="PROSITE" id="PS00624">
    <property type="entry name" value="GMC_OXRED_2"/>
    <property type="match status" value="1"/>
</dbReference>
<keyword id="KW-0274">FAD</keyword>
<keyword id="KW-0285">Flavoprotein</keyword>
<keyword id="KW-0520">NAD</keyword>
<keyword id="KW-0560">Oxidoreductase</keyword>
<feature type="chain" id="PRO_1000133318" description="Oxygen-dependent choline dehydrogenase">
    <location>
        <begin position="1"/>
        <end position="552"/>
    </location>
</feature>
<feature type="active site" description="Proton acceptor" evidence="1">
    <location>
        <position position="477"/>
    </location>
</feature>
<feature type="binding site" evidence="1">
    <location>
        <begin position="7"/>
        <end position="36"/>
    </location>
    <ligand>
        <name>FAD</name>
        <dbReference type="ChEBI" id="CHEBI:57692"/>
    </ligand>
</feature>
<organism>
    <name type="scientific">Acinetobacter baumannii (strain SDF)</name>
    <dbReference type="NCBI Taxonomy" id="509170"/>
    <lineage>
        <taxon>Bacteria</taxon>
        <taxon>Pseudomonadati</taxon>
        <taxon>Pseudomonadota</taxon>
        <taxon>Gammaproteobacteria</taxon>
        <taxon>Moraxellales</taxon>
        <taxon>Moraxellaceae</taxon>
        <taxon>Acinetobacter</taxon>
        <taxon>Acinetobacter calcoaceticus/baumannii complex</taxon>
    </lineage>
</organism>
<comment type="function">
    <text evidence="1">Involved in the biosynthesis of the osmoprotectant glycine betaine. Catalyzes the oxidation of choline to betaine aldehyde and betaine aldehyde to glycine betaine at the same rate.</text>
</comment>
<comment type="catalytic activity">
    <reaction evidence="1">
        <text>choline + A = betaine aldehyde + AH2</text>
        <dbReference type="Rhea" id="RHEA:17433"/>
        <dbReference type="ChEBI" id="CHEBI:13193"/>
        <dbReference type="ChEBI" id="CHEBI:15354"/>
        <dbReference type="ChEBI" id="CHEBI:15710"/>
        <dbReference type="ChEBI" id="CHEBI:17499"/>
        <dbReference type="EC" id="1.1.99.1"/>
    </reaction>
</comment>
<comment type="catalytic activity">
    <reaction evidence="1">
        <text>betaine aldehyde + NAD(+) + H2O = glycine betaine + NADH + 2 H(+)</text>
        <dbReference type="Rhea" id="RHEA:15305"/>
        <dbReference type="ChEBI" id="CHEBI:15377"/>
        <dbReference type="ChEBI" id="CHEBI:15378"/>
        <dbReference type="ChEBI" id="CHEBI:15710"/>
        <dbReference type="ChEBI" id="CHEBI:17750"/>
        <dbReference type="ChEBI" id="CHEBI:57540"/>
        <dbReference type="ChEBI" id="CHEBI:57945"/>
        <dbReference type="EC" id="1.2.1.8"/>
    </reaction>
</comment>
<comment type="cofactor">
    <cofactor evidence="1">
        <name>FAD</name>
        <dbReference type="ChEBI" id="CHEBI:57692"/>
    </cofactor>
</comment>
<comment type="pathway">
    <text evidence="1">Amine and polyamine biosynthesis; betaine biosynthesis via choline pathway; betaine aldehyde from choline (cytochrome c reductase route): step 1/1.</text>
</comment>
<comment type="similarity">
    <text evidence="1">Belongs to the GMC oxidoreductase family.</text>
</comment>
<reference key="1">
    <citation type="journal article" date="2008" name="PLoS ONE">
        <title>Comparative analysis of Acinetobacters: three genomes for three lifestyles.</title>
        <authorList>
            <person name="Vallenet D."/>
            <person name="Nordmann P."/>
            <person name="Barbe V."/>
            <person name="Poirel L."/>
            <person name="Mangenot S."/>
            <person name="Bataille E."/>
            <person name="Dossat C."/>
            <person name="Gas S."/>
            <person name="Kreimeyer A."/>
            <person name="Lenoble P."/>
            <person name="Oztas S."/>
            <person name="Poulain J."/>
            <person name="Segurens B."/>
            <person name="Robert C."/>
            <person name="Abergel C."/>
            <person name="Claverie J.-M."/>
            <person name="Raoult D."/>
            <person name="Medigue C."/>
            <person name="Weissenbach J."/>
            <person name="Cruveiller S."/>
        </authorList>
    </citation>
    <scope>NUCLEOTIDE SEQUENCE [LARGE SCALE GENOMIC DNA]</scope>
    <source>
        <strain>SDF</strain>
    </source>
</reference>